<reference key="1">
    <citation type="journal article" date="1990" name="Genes Dev.">
        <title>MHC class II regulatory factor RFX has a novel DNA-binding domain and a functionally independent dimerization domain.</title>
        <authorList>
            <person name="Reith W."/>
            <person name="Sanchez-Herrero C."/>
            <person name="Kobr M."/>
            <person name="Silacci P."/>
            <person name="Berte C."/>
            <person name="Barras E."/>
            <person name="Mach B."/>
        </authorList>
    </citation>
    <scope>NUCLEOTIDE SEQUENCE [MRNA]</scope>
    <scope>VARIANT ALA-370</scope>
</reference>
<reference key="2">
    <citation type="journal article" date="2004" name="Nature">
        <title>The DNA sequence and biology of human chromosome 19.</title>
        <authorList>
            <person name="Grimwood J."/>
            <person name="Gordon L.A."/>
            <person name="Olsen A.S."/>
            <person name="Terry A."/>
            <person name="Schmutz J."/>
            <person name="Lamerdin J.E."/>
            <person name="Hellsten U."/>
            <person name="Goodstein D."/>
            <person name="Couronne O."/>
            <person name="Tran-Gyamfi M."/>
            <person name="Aerts A."/>
            <person name="Altherr M."/>
            <person name="Ashworth L."/>
            <person name="Bajorek E."/>
            <person name="Black S."/>
            <person name="Branscomb E."/>
            <person name="Caenepeel S."/>
            <person name="Carrano A.V."/>
            <person name="Caoile C."/>
            <person name="Chan Y.M."/>
            <person name="Christensen M."/>
            <person name="Cleland C.A."/>
            <person name="Copeland A."/>
            <person name="Dalin E."/>
            <person name="Dehal P."/>
            <person name="Denys M."/>
            <person name="Detter J.C."/>
            <person name="Escobar J."/>
            <person name="Flowers D."/>
            <person name="Fotopulos D."/>
            <person name="Garcia C."/>
            <person name="Georgescu A.M."/>
            <person name="Glavina T."/>
            <person name="Gomez M."/>
            <person name="Gonzales E."/>
            <person name="Groza M."/>
            <person name="Hammon N."/>
            <person name="Hawkins T."/>
            <person name="Haydu L."/>
            <person name="Ho I."/>
            <person name="Huang W."/>
            <person name="Israni S."/>
            <person name="Jett J."/>
            <person name="Kadner K."/>
            <person name="Kimball H."/>
            <person name="Kobayashi A."/>
            <person name="Larionov V."/>
            <person name="Leem S.-H."/>
            <person name="Lopez F."/>
            <person name="Lou Y."/>
            <person name="Lowry S."/>
            <person name="Malfatti S."/>
            <person name="Martinez D."/>
            <person name="McCready P.M."/>
            <person name="Medina C."/>
            <person name="Morgan J."/>
            <person name="Nelson K."/>
            <person name="Nolan M."/>
            <person name="Ovcharenko I."/>
            <person name="Pitluck S."/>
            <person name="Pollard M."/>
            <person name="Popkie A.P."/>
            <person name="Predki P."/>
            <person name="Quan G."/>
            <person name="Ramirez L."/>
            <person name="Rash S."/>
            <person name="Retterer J."/>
            <person name="Rodriguez A."/>
            <person name="Rogers S."/>
            <person name="Salamov A."/>
            <person name="Salazar A."/>
            <person name="She X."/>
            <person name="Smith D."/>
            <person name="Slezak T."/>
            <person name="Solovyev V."/>
            <person name="Thayer N."/>
            <person name="Tice H."/>
            <person name="Tsai M."/>
            <person name="Ustaszewska A."/>
            <person name="Vo N."/>
            <person name="Wagner M."/>
            <person name="Wheeler J."/>
            <person name="Wu K."/>
            <person name="Xie G."/>
            <person name="Yang J."/>
            <person name="Dubchak I."/>
            <person name="Furey T.S."/>
            <person name="DeJong P."/>
            <person name="Dickson M."/>
            <person name="Gordon D."/>
            <person name="Eichler E.E."/>
            <person name="Pennacchio L.A."/>
            <person name="Richardson P."/>
            <person name="Stubbs L."/>
            <person name="Rokhsar D.S."/>
            <person name="Myers R.M."/>
            <person name="Rubin E.M."/>
            <person name="Lucas S.M."/>
        </authorList>
    </citation>
    <scope>NUCLEOTIDE SEQUENCE [LARGE SCALE GENOMIC DNA]</scope>
</reference>
<reference key="3">
    <citation type="journal article" date="2004" name="Genome Res.">
        <title>The status, quality, and expansion of the NIH full-length cDNA project: the Mammalian Gene Collection (MGC).</title>
        <authorList>
            <consortium name="The MGC Project Team"/>
        </authorList>
    </citation>
    <scope>NUCLEOTIDE SEQUENCE [LARGE SCALE MRNA]</scope>
    <scope>VARIANT ALA-370</scope>
    <source>
        <tissue>Testis</tissue>
    </source>
</reference>
<reference key="4">
    <citation type="journal article" date="1993" name="Mol. Cell. Biol.">
        <title>RFX1 is identical to enhancer factor C and functions as a transactivator of the hepatitis B virus enhancer.</title>
        <authorList>
            <person name="Siegrist C.A."/>
            <person name="Durand B."/>
            <person name="Emery P."/>
            <person name="David E."/>
            <person name="Hearing P."/>
            <person name="Mach B."/>
            <person name="Reith W."/>
        </authorList>
    </citation>
    <scope>IDENTITY OF RFX1 AND EF-C</scope>
</reference>
<reference key="5">
    <citation type="journal article" date="1993" name="Gene">
        <title>Transcription factor RFX1 helps control the promoter of the mouse ribosomal protein-encoding gene rpL30 by binding to its alpha element.</title>
        <authorList>
            <person name="Safrany G."/>
            <person name="Perry R.P."/>
        </authorList>
    </citation>
    <scope>BINDING TO RPL30 PROMOTER</scope>
</reference>
<reference key="6">
    <citation type="journal article" date="1999" name="Mol. Cell. Biol.">
        <title>Dimeric RFX proteins contribute to the activity and lineage specificity of the interleukin-5 receptor alpha promoter through activation and repression domains.</title>
        <authorList>
            <person name="Iwama A."/>
            <person name="Pan J."/>
            <person name="Zhang P."/>
            <person name="Reith W."/>
            <person name="Mach B."/>
            <person name="Tenen D.G."/>
            <person name="Sun Z."/>
        </authorList>
    </citation>
    <scope>SUBUNIT</scope>
</reference>
<reference key="7">
    <citation type="journal article" date="1992" name="Mol. Cell. Biol.">
        <title>The DNA-binding defect observed in major histocompatibility complex class II regulatory mutants concerns only one member of a family of complexes binding to the X boxes of class II promoters.</title>
        <authorList>
            <person name="Sanchez-Herrero C."/>
            <person name="Reith W."/>
            <person name="Silacci P."/>
            <person name="Mach B."/>
        </authorList>
    </citation>
    <scope>SHOWS THAT BLS II IS NOT DUE TO RFX1</scope>
</reference>
<reference key="8">
    <citation type="journal article" date="2008" name="Mol. Cell">
        <title>Kinase-selective enrichment enables quantitative phosphoproteomics of the kinome across the cell cycle.</title>
        <authorList>
            <person name="Daub H."/>
            <person name="Olsen J.V."/>
            <person name="Bairlein M."/>
            <person name="Gnad F."/>
            <person name="Oppermann F.S."/>
            <person name="Korner R."/>
            <person name="Greff Z."/>
            <person name="Keri G."/>
            <person name="Stemmann O."/>
            <person name="Mann M."/>
        </authorList>
    </citation>
    <scope>IDENTIFICATION BY MASS SPECTROMETRY [LARGE SCALE ANALYSIS]</scope>
    <source>
        <tissue>Cervix carcinoma</tissue>
    </source>
</reference>
<reference key="9">
    <citation type="journal article" date="2008" name="Proc. Natl. Acad. Sci. U.S.A.">
        <title>A quantitative atlas of mitotic phosphorylation.</title>
        <authorList>
            <person name="Dephoure N."/>
            <person name="Zhou C."/>
            <person name="Villen J."/>
            <person name="Beausoleil S.A."/>
            <person name="Bakalarski C.E."/>
            <person name="Elledge S.J."/>
            <person name="Gygi S.P."/>
        </authorList>
    </citation>
    <scope>IDENTIFICATION BY MASS SPECTROMETRY [LARGE SCALE ANALYSIS]</scope>
    <source>
        <tissue>Cervix carcinoma</tissue>
    </source>
</reference>
<reference key="10">
    <citation type="journal article" date="2009" name="Sci. Signal.">
        <title>Quantitative phosphoproteomic analysis of T cell receptor signaling reveals system-wide modulation of protein-protein interactions.</title>
        <authorList>
            <person name="Mayya V."/>
            <person name="Lundgren D.H."/>
            <person name="Hwang S.-I."/>
            <person name="Rezaul K."/>
            <person name="Wu L."/>
            <person name="Eng J.K."/>
            <person name="Rodionov V."/>
            <person name="Han D.K."/>
        </authorList>
    </citation>
    <scope>IDENTIFICATION BY MASS SPECTROMETRY [LARGE SCALE ANALYSIS]</scope>
    <source>
        <tissue>Leukemic T-cell</tissue>
    </source>
</reference>
<reference key="11">
    <citation type="journal article" date="2010" name="Sci. Signal.">
        <title>Quantitative phosphoproteomics reveals widespread full phosphorylation site occupancy during mitosis.</title>
        <authorList>
            <person name="Olsen J.V."/>
            <person name="Vermeulen M."/>
            <person name="Santamaria A."/>
            <person name="Kumar C."/>
            <person name="Miller M.L."/>
            <person name="Jensen L.J."/>
            <person name="Gnad F."/>
            <person name="Cox J."/>
            <person name="Jensen T.S."/>
            <person name="Nigg E.A."/>
            <person name="Brunak S."/>
            <person name="Mann M."/>
        </authorList>
    </citation>
    <scope>PHOSPHORYLATION [LARGE SCALE ANALYSIS] AT SER-978 AND SER-979</scope>
    <scope>IDENTIFICATION BY MASS SPECTROMETRY [LARGE SCALE ANALYSIS]</scope>
    <source>
        <tissue>Cervix carcinoma</tissue>
    </source>
</reference>
<reference key="12">
    <citation type="journal article" date="2011" name="BMC Syst. Biol.">
        <title>Initial characterization of the human central proteome.</title>
        <authorList>
            <person name="Burkard T.R."/>
            <person name="Planyavsky M."/>
            <person name="Kaupe I."/>
            <person name="Breitwieser F.P."/>
            <person name="Buerckstuemmer T."/>
            <person name="Bennett K.L."/>
            <person name="Superti-Furga G."/>
            <person name="Colinge J."/>
        </authorList>
    </citation>
    <scope>IDENTIFICATION BY MASS SPECTROMETRY [LARGE SCALE ANALYSIS]</scope>
</reference>
<reference key="13">
    <citation type="journal article" date="2013" name="J. Proteome Res.">
        <title>Toward a comprehensive characterization of a human cancer cell phosphoproteome.</title>
        <authorList>
            <person name="Zhou H."/>
            <person name="Di Palma S."/>
            <person name="Preisinger C."/>
            <person name="Peng M."/>
            <person name="Polat A.N."/>
            <person name="Heck A.J."/>
            <person name="Mohammed S."/>
        </authorList>
    </citation>
    <scope>IDENTIFICATION BY MASS SPECTROMETRY [LARGE SCALE ANALYSIS]</scope>
    <source>
        <tissue>Erythroleukemia</tissue>
    </source>
</reference>
<reference key="14">
    <citation type="journal article" date="2014" name="J. Proteomics">
        <title>An enzyme assisted RP-RPLC approach for in-depth analysis of human liver phosphoproteome.</title>
        <authorList>
            <person name="Bian Y."/>
            <person name="Song C."/>
            <person name="Cheng K."/>
            <person name="Dong M."/>
            <person name="Wang F."/>
            <person name="Huang J."/>
            <person name="Sun D."/>
            <person name="Wang L."/>
            <person name="Ye M."/>
            <person name="Zou H."/>
        </authorList>
    </citation>
    <scope>PHOSPHORYLATION [LARGE SCALE ANALYSIS] AT SER-60</scope>
    <scope>IDENTIFICATION BY MASS SPECTROMETRY [LARGE SCALE ANALYSIS]</scope>
    <source>
        <tissue>Liver</tissue>
    </source>
</reference>
<reference key="15">
    <citation type="journal article" date="2000" name="Nature">
        <title>Structure of the winged-helix protein hRFX1 reveals a new mode of DNA binding.</title>
        <authorList>
            <person name="Gajiwala K.S."/>
            <person name="Chen H."/>
            <person name="Cornille F."/>
            <person name="Roques B.P."/>
            <person name="Reith W."/>
            <person name="Mach B."/>
            <person name="Burley S.K."/>
        </authorList>
    </citation>
    <scope>X-RAY CRYSTALLOGRAPHY (1.5 ANGSTROMS) OF 438-513 IN COMPLEX WITH DNA</scope>
</reference>
<accession>P22670</accession>
<organism>
    <name type="scientific">Homo sapiens</name>
    <name type="common">Human</name>
    <dbReference type="NCBI Taxonomy" id="9606"/>
    <lineage>
        <taxon>Eukaryota</taxon>
        <taxon>Metazoa</taxon>
        <taxon>Chordata</taxon>
        <taxon>Craniata</taxon>
        <taxon>Vertebrata</taxon>
        <taxon>Euteleostomi</taxon>
        <taxon>Mammalia</taxon>
        <taxon>Eutheria</taxon>
        <taxon>Euarchontoglires</taxon>
        <taxon>Primates</taxon>
        <taxon>Haplorrhini</taxon>
        <taxon>Catarrhini</taxon>
        <taxon>Hominidae</taxon>
        <taxon>Homo</taxon>
    </lineage>
</organism>
<sequence length="979" mass="104758">MATQAYTELQAAPPPSQPPQAPPQAQPQPPPPPPPAAPQPPQPPTAAATPQPQYVTELQSPQPQAQPPGGQKQYVTELPAVPAPSQPTGAPTPSPAPQQYIVVTVSEGAMRASETVSEASPGSTASQTGVPTQVVQQVQGTQQRLLVQTSVQAKPGHVSPLQLTNIQVPQQALPTQRLVVQSAAPGSKGGQVSLTVHGTQQVHSPPEQSPVQANSSSSKTAGAPTGTVPQQLQVHGVQQSVPVTQERSVVQATPQAPKPGPVQPLTVQGLQPVHVAQEVQQLQQVPVPHVYSSQVQYVEGGDASYTASAIRSSTYSYPETPLYTQTASTSYYEAAGTATQVSTPATSQAVASSGSMPMYVSGSQVVASSTSTGAGASNSSGGGGSGGGGGGGGGGGGGGSGSTGGGGSGAGTYVIQGGYMLGSASQSYSHTTRASPATVQWLLDNYETAEGVSLPRSTLYCHYLLHCQEQKLEPVNAASFGKLIRSVFMGLRTRRLGTRGNSKYHYYGLRIKASSPLLRLMEDQQHMAMRGQPFSQKQRLKPIQKMEGMTNGVAVGQQPSTGLSDISAQVQQYQQFLDASRSLPDFTELDLQGKVLPEGVGPGDIKAFQVLYREHCEAIVDVMVNLQFTLVETLWKTFWRYNLSQPSEAPPLAVHDEAEKRLPKAILVLLSKFEPVLQWTKHCDNVLYQGLVEILIPDVLRPIPSALTQAIRNFAKSLESWLTHAMVNIPEEMLRVKVAAAGAFAQTLRRYTSLNHLAQAARAVLQNTAQINQMLSDLNRVDFANVQEQASWVCRCEDRVVQRLEQDFKVTLQQQNSLEQWAAWLDGVVSQVLKPYQGSAGFPKAAKLFLLKWSFYSSMVIRDLTLRSAASFGSFHLIRLLYDEYMYYLIEHRVAQAKGETPIAVMGEFANLATSLNPLDPDKDEEEEEEEESEDELPQDISLAAGGESPALGPETLEPPAKLARTDARGLFVQALPSS</sequence>
<proteinExistence type="evidence at protein level"/>
<evidence type="ECO:0000255" key="1">
    <source>
        <dbReference type="PROSITE-ProRule" id="PRU00858"/>
    </source>
</evidence>
<evidence type="ECO:0000256" key="2">
    <source>
        <dbReference type="SAM" id="MobiDB-lite"/>
    </source>
</evidence>
<evidence type="ECO:0000269" key="3">
    <source>
    </source>
</evidence>
<evidence type="ECO:0000269" key="4">
    <source>
    </source>
</evidence>
<evidence type="ECO:0000269" key="5">
    <source>
    </source>
</evidence>
<evidence type="ECO:0000269" key="6">
    <source>
    </source>
</evidence>
<evidence type="ECO:0007744" key="7">
    <source>
    </source>
</evidence>
<evidence type="ECO:0007744" key="8">
    <source>
    </source>
</evidence>
<evidence type="ECO:0007829" key="9">
    <source>
        <dbReference type="PDB" id="1DP7"/>
    </source>
</evidence>
<comment type="function">
    <text>Regulatory factor essential for MHC class II genes expression. Binds to the X boxes of MHC class II genes. Also binds to an inverted repeat (ENH1) required for hepatitis B virus genes expression and to the most upstream element (alpha) of the RPL30 promoter.</text>
</comment>
<comment type="subunit">
    <text evidence="3 4">Homodimer; binds DNA as a homodimer (PubMed:10706293). Heterodimer; heterodimerizes with RFX2 and RFX3 (PubMed:10330134).</text>
</comment>
<comment type="interaction">
    <interactant intactId="EBI-716037">
        <id>P22670</id>
    </interactant>
    <interactant intactId="EBI-10706164">
        <id>P32314</id>
        <label>FOXN2</label>
    </interactant>
    <organismsDiffer>false</organismsDiffer>
    <experiments>5</experiments>
</comment>
<comment type="subcellular location">
    <subcellularLocation>
        <location>Nucleus</location>
    </subcellularLocation>
</comment>
<comment type="similarity">
    <text evidence="1">Belongs to the RFX family.</text>
</comment>
<gene>
    <name type="primary">RFX1</name>
</gene>
<protein>
    <recommendedName>
        <fullName>MHC class II regulatory factor RFX1</fullName>
    </recommendedName>
    <alternativeName>
        <fullName>Enhancer factor C</fullName>
        <shortName>EF-C</shortName>
    </alternativeName>
    <alternativeName>
        <fullName>Regulatory factor X 1</fullName>
        <shortName>RFX</shortName>
    </alternativeName>
    <alternativeName>
        <fullName>Transcription factor RFX1</fullName>
    </alternativeName>
</protein>
<name>RFX1_HUMAN</name>
<keyword id="KW-0002">3D-structure</keyword>
<keyword id="KW-0010">Activator</keyword>
<keyword id="KW-0238">DNA-binding</keyword>
<keyword id="KW-0539">Nucleus</keyword>
<keyword id="KW-0597">Phosphoprotein</keyword>
<keyword id="KW-1267">Proteomics identification</keyword>
<keyword id="KW-1185">Reference proteome</keyword>
<keyword id="KW-0804">Transcription</keyword>
<keyword id="KW-0805">Transcription regulation</keyword>
<feature type="chain" id="PRO_0000215286" description="MHC class II regulatory factor RFX1">
    <location>
        <begin position="1"/>
        <end position="979"/>
    </location>
</feature>
<feature type="DNA-binding region" description="RFX-type winged-helix" evidence="1">
    <location>
        <begin position="438"/>
        <end position="513"/>
    </location>
</feature>
<feature type="region of interest" description="Disordered" evidence="2">
    <location>
        <begin position="1"/>
        <end position="136"/>
    </location>
</feature>
<feature type="region of interest" description="Disordered" evidence="2">
    <location>
        <begin position="181"/>
        <end position="227"/>
    </location>
</feature>
<feature type="region of interest" description="Disordered" evidence="2">
    <location>
        <begin position="370"/>
        <end position="405"/>
    </location>
</feature>
<feature type="region of interest" description="Necessary for dimerization">
    <location>
        <begin position="744"/>
        <end position="979"/>
    </location>
</feature>
<feature type="region of interest" description="Disordered" evidence="2">
    <location>
        <begin position="915"/>
        <end position="960"/>
    </location>
</feature>
<feature type="compositionally biased region" description="Pro residues" evidence="2">
    <location>
        <begin position="12"/>
        <end position="44"/>
    </location>
</feature>
<feature type="compositionally biased region" description="Low complexity" evidence="2">
    <location>
        <begin position="45"/>
        <end position="73"/>
    </location>
</feature>
<feature type="compositionally biased region" description="Pro residues" evidence="2">
    <location>
        <begin position="81"/>
        <end position="96"/>
    </location>
</feature>
<feature type="compositionally biased region" description="Polar residues" evidence="2">
    <location>
        <begin position="114"/>
        <end position="126"/>
    </location>
</feature>
<feature type="compositionally biased region" description="Low complexity" evidence="2">
    <location>
        <begin position="127"/>
        <end position="136"/>
    </location>
</feature>
<feature type="compositionally biased region" description="Polar residues" evidence="2">
    <location>
        <begin position="190"/>
        <end position="203"/>
    </location>
</feature>
<feature type="compositionally biased region" description="Polar residues" evidence="2">
    <location>
        <begin position="209"/>
        <end position="220"/>
    </location>
</feature>
<feature type="compositionally biased region" description="Low complexity" evidence="2">
    <location>
        <begin position="370"/>
        <end position="379"/>
    </location>
</feature>
<feature type="compositionally biased region" description="Gly residues" evidence="2">
    <location>
        <begin position="380"/>
        <end position="405"/>
    </location>
</feature>
<feature type="compositionally biased region" description="Acidic residues" evidence="2">
    <location>
        <begin position="922"/>
        <end position="938"/>
    </location>
</feature>
<feature type="modified residue" description="Phosphoserine" evidence="8">
    <location>
        <position position="60"/>
    </location>
</feature>
<feature type="modified residue" description="Phosphoserine" evidence="7">
    <location>
        <position position="978"/>
    </location>
</feature>
<feature type="modified residue" description="Phosphoserine" evidence="7">
    <location>
        <position position="979"/>
    </location>
</feature>
<feature type="sequence variant" id="VAR_059781" description="In dbSNP:rs2305780." evidence="5 6">
    <original>T</original>
    <variation>A</variation>
    <location>
        <position position="370"/>
    </location>
</feature>
<feature type="helix" evidence="9">
    <location>
        <begin position="439"/>
        <end position="445"/>
    </location>
</feature>
<feature type="strand" evidence="9">
    <location>
        <begin position="446"/>
        <end position="455"/>
    </location>
</feature>
<feature type="helix" evidence="9">
    <location>
        <begin position="456"/>
        <end position="469"/>
    </location>
</feature>
<feature type="helix" evidence="9">
    <location>
        <begin position="477"/>
        <end position="487"/>
    </location>
</feature>
<feature type="strand" evidence="9">
    <location>
        <begin position="492"/>
        <end position="498"/>
    </location>
</feature>
<feature type="strand" evidence="9">
    <location>
        <begin position="503"/>
        <end position="511"/>
    </location>
</feature>
<dbReference type="EMBL" id="X58964">
    <property type="protein sequence ID" value="CAA41730.1"/>
    <property type="molecule type" value="mRNA"/>
</dbReference>
<dbReference type="EMBL" id="AC020916">
    <property type="status" value="NOT_ANNOTATED_CDS"/>
    <property type="molecule type" value="Genomic_DNA"/>
</dbReference>
<dbReference type="EMBL" id="AC022098">
    <property type="status" value="NOT_ANNOTATED_CDS"/>
    <property type="molecule type" value="Genomic_DNA"/>
</dbReference>
<dbReference type="EMBL" id="BC049826">
    <property type="protein sequence ID" value="AAH49826.1"/>
    <property type="molecule type" value="mRNA"/>
</dbReference>
<dbReference type="CCDS" id="CCDS12301.1"/>
<dbReference type="PIR" id="A35913">
    <property type="entry name" value="A35913"/>
</dbReference>
<dbReference type="RefSeq" id="NP_002909.4">
    <property type="nucleotide sequence ID" value="NM_002918.4"/>
</dbReference>
<dbReference type="RefSeq" id="XP_047295149.1">
    <property type="nucleotide sequence ID" value="XM_047439193.1"/>
</dbReference>
<dbReference type="RefSeq" id="XP_047295150.1">
    <property type="nucleotide sequence ID" value="XM_047439194.1"/>
</dbReference>
<dbReference type="RefSeq" id="XP_054188679.1">
    <property type="nucleotide sequence ID" value="XM_054332704.1"/>
</dbReference>
<dbReference type="RefSeq" id="XP_054188680.1">
    <property type="nucleotide sequence ID" value="XM_054332705.1"/>
</dbReference>
<dbReference type="PDB" id="1DP7">
    <property type="method" value="X-ray"/>
    <property type="resolution" value="1.50 A"/>
    <property type="chains" value="P=438-513"/>
</dbReference>
<dbReference type="PDBsum" id="1DP7"/>
<dbReference type="SMR" id="P22670"/>
<dbReference type="BioGRID" id="111921">
    <property type="interactions" value="76"/>
</dbReference>
<dbReference type="FunCoup" id="P22670">
    <property type="interactions" value="3613"/>
</dbReference>
<dbReference type="IntAct" id="P22670">
    <property type="interactions" value="41"/>
</dbReference>
<dbReference type="MINT" id="P22670"/>
<dbReference type="STRING" id="9606.ENSP00000254325"/>
<dbReference type="GlyCosmos" id="P22670">
    <property type="glycosylation" value="1 site, 1 glycan"/>
</dbReference>
<dbReference type="GlyGen" id="P22670">
    <property type="glycosylation" value="5 sites, 1 O-linked glycan (4 sites)"/>
</dbReference>
<dbReference type="iPTMnet" id="P22670"/>
<dbReference type="PhosphoSitePlus" id="P22670"/>
<dbReference type="SwissPalm" id="P22670"/>
<dbReference type="BioMuta" id="RFX1"/>
<dbReference type="DMDM" id="288558824"/>
<dbReference type="jPOST" id="P22670"/>
<dbReference type="MassIVE" id="P22670"/>
<dbReference type="PaxDb" id="9606-ENSP00000254325"/>
<dbReference type="PeptideAtlas" id="P22670"/>
<dbReference type="ProteomicsDB" id="54012"/>
<dbReference type="Pumba" id="P22670"/>
<dbReference type="Antibodypedia" id="26599">
    <property type="antibodies" value="177 antibodies from 27 providers"/>
</dbReference>
<dbReference type="DNASU" id="5989"/>
<dbReference type="Ensembl" id="ENST00000254325.9">
    <property type="protein sequence ID" value="ENSP00000254325.3"/>
    <property type="gene ID" value="ENSG00000132005.9"/>
</dbReference>
<dbReference type="Ensembl" id="ENST00000672295.1">
    <property type="protein sequence ID" value="ENSP00000500760.1"/>
    <property type="gene ID" value="ENSG00000288283.1"/>
</dbReference>
<dbReference type="GeneID" id="5989"/>
<dbReference type="KEGG" id="hsa:5989"/>
<dbReference type="MANE-Select" id="ENST00000254325.9">
    <property type="protein sequence ID" value="ENSP00000254325.3"/>
    <property type="RefSeq nucleotide sequence ID" value="NM_002918.5"/>
    <property type="RefSeq protein sequence ID" value="NP_002909.4"/>
</dbReference>
<dbReference type="UCSC" id="uc002mxv.4">
    <property type="organism name" value="human"/>
</dbReference>
<dbReference type="AGR" id="HGNC:9982"/>
<dbReference type="CTD" id="5989"/>
<dbReference type="DisGeNET" id="5989"/>
<dbReference type="GeneCards" id="RFX1"/>
<dbReference type="HGNC" id="HGNC:9982">
    <property type="gene designation" value="RFX1"/>
</dbReference>
<dbReference type="HPA" id="ENSG00000132005">
    <property type="expression patterns" value="Low tissue specificity"/>
</dbReference>
<dbReference type="MIM" id="600006">
    <property type="type" value="gene"/>
</dbReference>
<dbReference type="neXtProt" id="NX_P22670"/>
<dbReference type="OpenTargets" id="ENSG00000132005"/>
<dbReference type="PharmGKB" id="PA34352"/>
<dbReference type="VEuPathDB" id="HostDB:ENSG00000132005"/>
<dbReference type="eggNOG" id="KOG3712">
    <property type="taxonomic scope" value="Eukaryota"/>
</dbReference>
<dbReference type="GeneTree" id="ENSGT01050000244879"/>
<dbReference type="HOGENOM" id="CLU_010393_1_0_1"/>
<dbReference type="InParanoid" id="P22670"/>
<dbReference type="OMA" id="CCLEDER"/>
<dbReference type="OrthoDB" id="10056949at2759"/>
<dbReference type="PAN-GO" id="P22670">
    <property type="GO annotations" value="3 GO annotations based on evolutionary models"/>
</dbReference>
<dbReference type="PhylomeDB" id="P22670"/>
<dbReference type="TreeFam" id="TF321340"/>
<dbReference type="PathwayCommons" id="P22670"/>
<dbReference type="SignaLink" id="P22670"/>
<dbReference type="SIGNOR" id="P22670"/>
<dbReference type="BioGRID-ORCS" id="5989">
    <property type="hits" value="13 hits in 1185 CRISPR screens"/>
</dbReference>
<dbReference type="ChiTaRS" id="RFX1">
    <property type="organism name" value="human"/>
</dbReference>
<dbReference type="EvolutionaryTrace" id="P22670"/>
<dbReference type="GeneWiki" id="RFX1"/>
<dbReference type="GenomeRNAi" id="5989"/>
<dbReference type="Pharos" id="P22670">
    <property type="development level" value="Tbio"/>
</dbReference>
<dbReference type="PRO" id="PR:P22670"/>
<dbReference type="Proteomes" id="UP000005640">
    <property type="component" value="Chromosome 19"/>
</dbReference>
<dbReference type="RNAct" id="P22670">
    <property type="molecule type" value="protein"/>
</dbReference>
<dbReference type="Bgee" id="ENSG00000132005">
    <property type="expression patterns" value="Expressed in right testis and 95 other cell types or tissues"/>
</dbReference>
<dbReference type="ExpressionAtlas" id="P22670">
    <property type="expression patterns" value="baseline and differential"/>
</dbReference>
<dbReference type="GO" id="GO:0000785">
    <property type="term" value="C:chromatin"/>
    <property type="evidence" value="ECO:0000247"/>
    <property type="project" value="NTNU_SB"/>
</dbReference>
<dbReference type="GO" id="GO:0043231">
    <property type="term" value="C:intracellular membrane-bounded organelle"/>
    <property type="evidence" value="ECO:0000314"/>
    <property type="project" value="HPA"/>
</dbReference>
<dbReference type="GO" id="GO:0005654">
    <property type="term" value="C:nucleoplasm"/>
    <property type="evidence" value="ECO:0000314"/>
    <property type="project" value="HPA"/>
</dbReference>
<dbReference type="GO" id="GO:0000981">
    <property type="term" value="F:DNA-binding transcription factor activity, RNA polymerase II-specific"/>
    <property type="evidence" value="ECO:0000247"/>
    <property type="project" value="NTNU_SB"/>
</dbReference>
<dbReference type="GO" id="GO:0000978">
    <property type="term" value="F:RNA polymerase II cis-regulatory region sequence-specific DNA binding"/>
    <property type="evidence" value="ECO:0000318"/>
    <property type="project" value="GO_Central"/>
</dbReference>
<dbReference type="GO" id="GO:1990837">
    <property type="term" value="F:sequence-specific double-stranded DNA binding"/>
    <property type="evidence" value="ECO:0000314"/>
    <property type="project" value="ARUK-UCL"/>
</dbReference>
<dbReference type="GO" id="GO:0006955">
    <property type="term" value="P:immune response"/>
    <property type="evidence" value="ECO:0000304"/>
    <property type="project" value="ProtInc"/>
</dbReference>
<dbReference type="GO" id="GO:0006357">
    <property type="term" value="P:regulation of transcription by RNA polymerase II"/>
    <property type="evidence" value="ECO:0000318"/>
    <property type="project" value="GO_Central"/>
</dbReference>
<dbReference type="FunFam" id="1.10.10.10:FF:000017">
    <property type="entry name" value="transcription factor RFX3 isoform X1"/>
    <property type="match status" value="1"/>
</dbReference>
<dbReference type="Gene3D" id="1.10.10.10">
    <property type="entry name" value="Winged helix-like DNA-binding domain superfamily/Winged helix DNA-binding domain"/>
    <property type="match status" value="1"/>
</dbReference>
<dbReference type="InterPro" id="IPR003150">
    <property type="entry name" value="DNA-bd_RFX"/>
</dbReference>
<dbReference type="InterPro" id="IPR039779">
    <property type="entry name" value="RFX-like"/>
</dbReference>
<dbReference type="InterPro" id="IPR007668">
    <property type="entry name" value="RFX1_trans_act"/>
</dbReference>
<dbReference type="InterPro" id="IPR036388">
    <property type="entry name" value="WH-like_DNA-bd_sf"/>
</dbReference>
<dbReference type="InterPro" id="IPR036390">
    <property type="entry name" value="WH_DNA-bd_sf"/>
</dbReference>
<dbReference type="PANTHER" id="PTHR12619:SF23">
    <property type="entry name" value="MHC CLASS II REGULATORY FACTOR RFX1"/>
    <property type="match status" value="1"/>
</dbReference>
<dbReference type="PANTHER" id="PTHR12619">
    <property type="entry name" value="RFX TRANSCRIPTION FACTOR FAMILY"/>
    <property type="match status" value="1"/>
</dbReference>
<dbReference type="Pfam" id="PF25340">
    <property type="entry name" value="BCD_RFX"/>
    <property type="match status" value="1"/>
</dbReference>
<dbReference type="Pfam" id="PF04589">
    <property type="entry name" value="RFX1_trans_act"/>
    <property type="match status" value="1"/>
</dbReference>
<dbReference type="Pfam" id="PF02257">
    <property type="entry name" value="RFX_DNA_binding"/>
    <property type="match status" value="1"/>
</dbReference>
<dbReference type="SUPFAM" id="SSF46785">
    <property type="entry name" value="Winged helix' DNA-binding domain"/>
    <property type="match status" value="1"/>
</dbReference>
<dbReference type="PROSITE" id="PS51526">
    <property type="entry name" value="RFX_DBD"/>
    <property type="match status" value="1"/>
</dbReference>